<accession>B1Y1M1</accession>
<gene>
    <name type="ordered locus">Lcho_3225</name>
</gene>
<keyword id="KW-0067">ATP-binding</keyword>
<keyword id="KW-0436">Ligase</keyword>
<keyword id="KW-0547">Nucleotide-binding</keyword>
<keyword id="KW-1185">Reference proteome</keyword>
<dbReference type="EC" id="6.3.2.2" evidence="1"/>
<dbReference type="EMBL" id="CP001013">
    <property type="protein sequence ID" value="ACB35483.1"/>
    <property type="molecule type" value="Genomic_DNA"/>
</dbReference>
<dbReference type="RefSeq" id="WP_012348230.1">
    <property type="nucleotide sequence ID" value="NC_010524.1"/>
</dbReference>
<dbReference type="SMR" id="B1Y1M1"/>
<dbReference type="STRING" id="395495.Lcho_3225"/>
<dbReference type="KEGG" id="lch:Lcho_3225"/>
<dbReference type="eggNOG" id="COG2170">
    <property type="taxonomic scope" value="Bacteria"/>
</dbReference>
<dbReference type="HOGENOM" id="CLU_044848_1_1_4"/>
<dbReference type="OrthoDB" id="9769628at2"/>
<dbReference type="Proteomes" id="UP000001693">
    <property type="component" value="Chromosome"/>
</dbReference>
<dbReference type="GO" id="GO:0005524">
    <property type="term" value="F:ATP binding"/>
    <property type="evidence" value="ECO:0007669"/>
    <property type="project" value="UniProtKB-KW"/>
</dbReference>
<dbReference type="GO" id="GO:0004357">
    <property type="term" value="F:glutamate-cysteine ligase activity"/>
    <property type="evidence" value="ECO:0007669"/>
    <property type="project" value="UniProtKB-EC"/>
</dbReference>
<dbReference type="GO" id="GO:0042398">
    <property type="term" value="P:modified amino acid biosynthetic process"/>
    <property type="evidence" value="ECO:0007669"/>
    <property type="project" value="InterPro"/>
</dbReference>
<dbReference type="Gene3D" id="3.30.590.20">
    <property type="match status" value="1"/>
</dbReference>
<dbReference type="HAMAP" id="MF_01609">
    <property type="entry name" value="Glu_cys_ligase_2"/>
    <property type="match status" value="1"/>
</dbReference>
<dbReference type="InterPro" id="IPR050141">
    <property type="entry name" value="GCL_type2/YbdK_subfam"/>
</dbReference>
<dbReference type="InterPro" id="IPR006336">
    <property type="entry name" value="GCS2"/>
</dbReference>
<dbReference type="InterPro" id="IPR014746">
    <property type="entry name" value="Gln_synth/guanido_kin_cat_dom"/>
</dbReference>
<dbReference type="InterPro" id="IPR011793">
    <property type="entry name" value="YbdK"/>
</dbReference>
<dbReference type="NCBIfam" id="TIGR02050">
    <property type="entry name" value="gshA_cyan_rel"/>
    <property type="match status" value="1"/>
</dbReference>
<dbReference type="NCBIfam" id="NF010040">
    <property type="entry name" value="PRK13516.1"/>
    <property type="match status" value="1"/>
</dbReference>
<dbReference type="PANTHER" id="PTHR36510">
    <property type="entry name" value="GLUTAMATE--CYSTEINE LIGASE 2-RELATED"/>
    <property type="match status" value="1"/>
</dbReference>
<dbReference type="PANTHER" id="PTHR36510:SF1">
    <property type="entry name" value="GLUTAMATE--CYSTEINE LIGASE 2-RELATED"/>
    <property type="match status" value="1"/>
</dbReference>
<dbReference type="Pfam" id="PF04107">
    <property type="entry name" value="GCS2"/>
    <property type="match status" value="1"/>
</dbReference>
<dbReference type="SUPFAM" id="SSF55931">
    <property type="entry name" value="Glutamine synthetase/guanido kinase"/>
    <property type="match status" value="1"/>
</dbReference>
<evidence type="ECO:0000255" key="1">
    <source>
        <dbReference type="HAMAP-Rule" id="MF_01609"/>
    </source>
</evidence>
<feature type="chain" id="PRO_1000148224" description="Putative glutamate--cysteine ligase 2">
    <location>
        <begin position="1"/>
        <end position="374"/>
    </location>
</feature>
<name>GCS2_LEPCP</name>
<sequence length="374" mass="42442">MSLGEFAQSRSLTLGVELELQIVNTHDYDLAPSAVDLLRLMERHKVPGSVVPEMTDSMIELSTGICTDYDDALSQLREIRDALVSCAAQLNVGLCGGGTHPFQDWSQRRIFNKPRFQELSQLYGYLSKQFTIFGQHVHVGCPGPDQALVLLHGLSRFIPHLIALSASSPFVQGTDTGFDSARLNSVFAFPMSGRAPFVQTWDDFNVYFNKMTRTGVIKSMKDFYWDIRPKPEYGTIEVRVLDTPLTVEKAAAMAGYIQCLARWLRVEKPFELNEDDYLPYTYNRFQACRFGLDGIFVDPQTGEHRTLRDDILASFDKLELHAMELRAEGAINYLRADLLRIGNDASWIRHINDEEHLLAEVVRQQCQRWAGQGR</sequence>
<organism>
    <name type="scientific">Leptothrix cholodnii (strain ATCC 51168 / LMG 8142 / SP-6)</name>
    <name type="common">Leptothrix discophora (strain SP-6)</name>
    <dbReference type="NCBI Taxonomy" id="395495"/>
    <lineage>
        <taxon>Bacteria</taxon>
        <taxon>Pseudomonadati</taxon>
        <taxon>Pseudomonadota</taxon>
        <taxon>Betaproteobacteria</taxon>
        <taxon>Burkholderiales</taxon>
        <taxon>Sphaerotilaceae</taxon>
        <taxon>Leptothrix</taxon>
    </lineage>
</organism>
<comment type="function">
    <text evidence="1">ATP-dependent carboxylate-amine ligase which exhibits weak glutamate--cysteine ligase activity.</text>
</comment>
<comment type="catalytic activity">
    <reaction evidence="1">
        <text>L-cysteine + L-glutamate + ATP = gamma-L-glutamyl-L-cysteine + ADP + phosphate + H(+)</text>
        <dbReference type="Rhea" id="RHEA:13285"/>
        <dbReference type="ChEBI" id="CHEBI:15378"/>
        <dbReference type="ChEBI" id="CHEBI:29985"/>
        <dbReference type="ChEBI" id="CHEBI:30616"/>
        <dbReference type="ChEBI" id="CHEBI:35235"/>
        <dbReference type="ChEBI" id="CHEBI:43474"/>
        <dbReference type="ChEBI" id="CHEBI:58173"/>
        <dbReference type="ChEBI" id="CHEBI:456216"/>
        <dbReference type="EC" id="6.3.2.2"/>
    </reaction>
</comment>
<comment type="similarity">
    <text evidence="1">Belongs to the glutamate--cysteine ligase type 2 family. YbdK subfamily.</text>
</comment>
<protein>
    <recommendedName>
        <fullName evidence="1">Putative glutamate--cysteine ligase 2</fullName>
        <ecNumber evidence="1">6.3.2.2</ecNumber>
    </recommendedName>
    <alternativeName>
        <fullName evidence="1">Gamma-glutamylcysteine synthetase 2</fullName>
        <shortName evidence="1">GCS 2</shortName>
        <shortName evidence="1">Gamma-GCS 2</shortName>
    </alternativeName>
</protein>
<reference key="1">
    <citation type="submission" date="2008-03" db="EMBL/GenBank/DDBJ databases">
        <title>Complete sequence of Leptothrix cholodnii SP-6.</title>
        <authorList>
            <consortium name="US DOE Joint Genome Institute"/>
            <person name="Copeland A."/>
            <person name="Lucas S."/>
            <person name="Lapidus A."/>
            <person name="Glavina del Rio T."/>
            <person name="Dalin E."/>
            <person name="Tice H."/>
            <person name="Bruce D."/>
            <person name="Goodwin L."/>
            <person name="Pitluck S."/>
            <person name="Chertkov O."/>
            <person name="Brettin T."/>
            <person name="Detter J.C."/>
            <person name="Han C."/>
            <person name="Kuske C.R."/>
            <person name="Schmutz J."/>
            <person name="Larimer F."/>
            <person name="Land M."/>
            <person name="Hauser L."/>
            <person name="Kyrpides N."/>
            <person name="Lykidis A."/>
            <person name="Emerson D."/>
            <person name="Richardson P."/>
        </authorList>
    </citation>
    <scope>NUCLEOTIDE SEQUENCE [LARGE SCALE GENOMIC DNA]</scope>
    <source>
        <strain>ATCC 51168 / LMG 8142 / SP-6</strain>
    </source>
</reference>
<proteinExistence type="inferred from homology"/>